<accession>P50501</accession>
<name>AQPA_PELLE</name>
<keyword id="KW-0325">Glycoprotein</keyword>
<keyword id="KW-0472">Membrane</keyword>
<keyword id="KW-0677">Repeat</keyword>
<keyword id="KW-0812">Transmembrane</keyword>
<keyword id="KW-1133">Transmembrane helix</keyword>
<keyword id="KW-0813">Transport</keyword>
<proteinExistence type="evidence at transcript level"/>
<protein>
    <recommendedName>
        <fullName>Aquaporin FA-CHIP</fullName>
    </recommendedName>
</protein>
<reference key="1">
    <citation type="journal article" date="1994" name="Biochim. Biophys. Acta">
        <title>Sequence and functional expression of an amphibian water channel, FA-CHIP: a new member of the MIP family.</title>
        <authorList>
            <person name="Abrami L."/>
            <person name="Simon M."/>
            <person name="Rousselet G."/>
            <person name="Berthonaud V."/>
            <person name="Buhler J.M."/>
        </authorList>
    </citation>
    <scope>NUCLEOTIDE SEQUENCE [MRNA]</scope>
    <source>
        <tissue>Urinary bladder urothelium</tissue>
    </source>
</reference>
<organism>
    <name type="scientific">Pelophylax lessonae</name>
    <name type="common">Pool frog</name>
    <name type="synonym">Rana lessonae</name>
    <dbReference type="NCBI Taxonomy" id="45623"/>
    <lineage>
        <taxon>Eukaryota</taxon>
        <taxon>Metazoa</taxon>
        <taxon>Chordata</taxon>
        <taxon>Craniata</taxon>
        <taxon>Vertebrata</taxon>
        <taxon>Euteleostomi</taxon>
        <taxon>Amphibia</taxon>
        <taxon>Batrachia</taxon>
        <taxon>Anura</taxon>
        <taxon>Neobatrachia</taxon>
        <taxon>Ranoidea</taxon>
        <taxon>Ranidae</taxon>
        <taxon>Pelophylax</taxon>
    </lineage>
</organism>
<sequence>MASEFKKKAFWRAVIAEFLAMILFVFISIGAALGFNFPIEEKANQTVGRSQDIVKVSLAFGISIATMAQSVGHVSGAHLNPAVTLGCLLSCQISILKAVMYIIAQCLGAVVATAILSGITSGLENNSLGLNGLSPGVSAGQGLGVEILVTFQLVLCVVAVTDRRRHDVSGSVPLAIGLSVALGHLIAIDYTGCGMNPARSFGSAVLTKNFTYHWIFWVGPMIGGAAAAIIYDFILAPRTSDLTDRMKVWTNGQVEEYELDGDDNTRVEMKPK</sequence>
<gene>
    <name type="primary">AQPA</name>
</gene>
<comment type="function">
    <text>Forms a water-specific channel.</text>
</comment>
<comment type="subcellular location">
    <subcellularLocation>
        <location>Membrane</location>
        <topology>Multi-pass membrane protein</topology>
    </subcellularLocation>
</comment>
<comment type="domain">
    <text>Aquaporins contain two tandem repeats each containing three membrane-spanning domains and a pore-forming loop with the signature motif Asn-Pro-Ala (NPA).</text>
</comment>
<comment type="similarity">
    <text evidence="3">Belongs to the MIP/aquaporin (TC 1.A.8) family.</text>
</comment>
<evidence type="ECO:0000250" key="1"/>
<evidence type="ECO:0000255" key="2"/>
<evidence type="ECO:0000305" key="3"/>
<dbReference type="EMBL" id="L24754">
    <property type="protein sequence ID" value="AAC38016.1"/>
    <property type="molecule type" value="mRNA"/>
</dbReference>
<dbReference type="PIR" id="I51164">
    <property type="entry name" value="I51164"/>
</dbReference>
<dbReference type="SMR" id="P50501"/>
<dbReference type="GlyCosmos" id="P50501">
    <property type="glycosylation" value="3 sites, No reported glycans"/>
</dbReference>
<dbReference type="GO" id="GO:0005886">
    <property type="term" value="C:plasma membrane"/>
    <property type="evidence" value="ECO:0000314"/>
    <property type="project" value="UniProtKB"/>
</dbReference>
<dbReference type="GO" id="GO:0008519">
    <property type="term" value="F:ammonium channel activity"/>
    <property type="evidence" value="ECO:0007669"/>
    <property type="project" value="TreeGrafter"/>
</dbReference>
<dbReference type="GO" id="GO:0035379">
    <property type="term" value="F:carbon dioxide transmembrane transporter activity"/>
    <property type="evidence" value="ECO:0007669"/>
    <property type="project" value="TreeGrafter"/>
</dbReference>
<dbReference type="GO" id="GO:0015168">
    <property type="term" value="F:glycerol transmembrane transporter activity"/>
    <property type="evidence" value="ECO:0000314"/>
    <property type="project" value="UniProtKB"/>
</dbReference>
<dbReference type="GO" id="GO:0015250">
    <property type="term" value="F:water channel activity"/>
    <property type="evidence" value="ECO:0007669"/>
    <property type="project" value="TreeGrafter"/>
</dbReference>
<dbReference type="GO" id="GO:0015793">
    <property type="term" value="P:glycerol transmembrane transport"/>
    <property type="evidence" value="ECO:0000314"/>
    <property type="project" value="UniProtKB"/>
</dbReference>
<dbReference type="GO" id="GO:0006972">
    <property type="term" value="P:hyperosmotic response"/>
    <property type="evidence" value="ECO:0007669"/>
    <property type="project" value="TreeGrafter"/>
</dbReference>
<dbReference type="GO" id="GO:0003097">
    <property type="term" value="P:renal water transport"/>
    <property type="evidence" value="ECO:0007669"/>
    <property type="project" value="TreeGrafter"/>
</dbReference>
<dbReference type="CDD" id="cd00333">
    <property type="entry name" value="MIP"/>
    <property type="match status" value="1"/>
</dbReference>
<dbReference type="FunFam" id="1.20.1080.10:FF:000012">
    <property type="entry name" value="Aquaporin-1"/>
    <property type="match status" value="1"/>
</dbReference>
<dbReference type="Gene3D" id="1.20.1080.10">
    <property type="entry name" value="Glycerol uptake facilitator protein"/>
    <property type="match status" value="1"/>
</dbReference>
<dbReference type="InterPro" id="IPR023271">
    <property type="entry name" value="Aquaporin-like"/>
</dbReference>
<dbReference type="InterPro" id="IPR023274">
    <property type="entry name" value="Aquaporin_1"/>
</dbReference>
<dbReference type="InterPro" id="IPR034294">
    <property type="entry name" value="Aquaporin_transptr"/>
</dbReference>
<dbReference type="InterPro" id="IPR000425">
    <property type="entry name" value="MIP"/>
</dbReference>
<dbReference type="InterPro" id="IPR022357">
    <property type="entry name" value="MIP_CS"/>
</dbReference>
<dbReference type="NCBIfam" id="TIGR00861">
    <property type="entry name" value="MIP"/>
    <property type="match status" value="1"/>
</dbReference>
<dbReference type="PANTHER" id="PTHR19139">
    <property type="entry name" value="AQUAPORIN TRANSPORTER"/>
    <property type="match status" value="1"/>
</dbReference>
<dbReference type="PANTHER" id="PTHR19139:SF161">
    <property type="entry name" value="AQUAPORIN-1"/>
    <property type="match status" value="1"/>
</dbReference>
<dbReference type="Pfam" id="PF00230">
    <property type="entry name" value="MIP"/>
    <property type="match status" value="1"/>
</dbReference>
<dbReference type="PRINTS" id="PR02013">
    <property type="entry name" value="AQUAPORIN1"/>
</dbReference>
<dbReference type="PRINTS" id="PR00783">
    <property type="entry name" value="MINTRINSICP"/>
</dbReference>
<dbReference type="SUPFAM" id="SSF81338">
    <property type="entry name" value="Aquaporin-like"/>
    <property type="match status" value="1"/>
</dbReference>
<dbReference type="PROSITE" id="PS00221">
    <property type="entry name" value="MIP"/>
    <property type="match status" value="1"/>
</dbReference>
<feature type="chain" id="PRO_0000063973" description="Aquaporin FA-CHIP">
    <location>
        <begin position="1"/>
        <end position="272"/>
    </location>
</feature>
<feature type="topological domain" description="Cytoplasmic" evidence="2">
    <location>
        <begin position="1"/>
        <end position="17"/>
    </location>
</feature>
<feature type="transmembrane region" description="Helical" evidence="2">
    <location>
        <begin position="18"/>
        <end position="35"/>
    </location>
</feature>
<feature type="topological domain" description="Extracellular" evidence="2">
    <location>
        <begin position="36"/>
        <end position="52"/>
    </location>
</feature>
<feature type="transmembrane region" description="Helical" evidence="2">
    <location>
        <begin position="53"/>
        <end position="71"/>
    </location>
</feature>
<feature type="topological domain" description="Cytoplasmic" evidence="2">
    <location>
        <begin position="72"/>
        <end position="97"/>
    </location>
</feature>
<feature type="transmembrane region" description="Helical" evidence="2">
    <location>
        <begin position="98"/>
        <end position="119"/>
    </location>
</feature>
<feature type="topological domain" description="Extracellular" evidence="2">
    <location>
        <begin position="120"/>
        <end position="139"/>
    </location>
</feature>
<feature type="transmembrane region" description="Helical" evidence="2">
    <location>
        <begin position="140"/>
        <end position="160"/>
    </location>
</feature>
<feature type="topological domain" description="Cytoplasmic" evidence="2">
    <location>
        <begin position="161"/>
        <end position="168"/>
    </location>
</feature>
<feature type="transmembrane region" description="Helical" evidence="2">
    <location>
        <begin position="169"/>
        <end position="188"/>
    </location>
</feature>
<feature type="topological domain" description="Extracellular" evidence="2">
    <location>
        <begin position="189"/>
        <end position="214"/>
    </location>
</feature>
<feature type="transmembrane region" description="Helical" evidence="2">
    <location>
        <begin position="215"/>
        <end position="236"/>
    </location>
</feature>
<feature type="topological domain" description="Cytoplasmic" evidence="2">
    <location>
        <begin position="237"/>
        <end position="272"/>
    </location>
</feature>
<feature type="short sequence motif" description="NPA 1">
    <location>
        <begin position="80"/>
        <end position="82"/>
    </location>
</feature>
<feature type="short sequence motif" description="NPA 2">
    <location>
        <begin position="196"/>
        <end position="198"/>
    </location>
</feature>
<feature type="site" description="Hg(2+)-sensitive residue" evidence="1">
    <location>
        <position position="193"/>
    </location>
</feature>
<feature type="glycosylation site" description="N-linked (GlcNAc...) asparagine" evidence="2">
    <location>
        <position position="44"/>
    </location>
</feature>
<feature type="glycosylation site" description="N-linked (GlcNAc...) asparagine" evidence="2">
    <location>
        <position position="125"/>
    </location>
</feature>
<feature type="glycosylation site" description="N-linked (GlcNAc...) asparagine" evidence="2">
    <location>
        <position position="209"/>
    </location>
</feature>